<gene>
    <name evidence="1" type="primary">atpE</name>
</gene>
<feature type="chain" id="PRO_0000275216" description="ATP synthase epsilon chain, chloroplastic">
    <location>
        <begin position="1"/>
        <end position="136"/>
    </location>
</feature>
<proteinExistence type="inferred from homology"/>
<dbReference type="EMBL" id="DQ396875">
    <property type="protein sequence ID" value="ABD48241.1"/>
    <property type="molecule type" value="Genomic_DNA"/>
</dbReference>
<dbReference type="RefSeq" id="YP_635959.1">
    <property type="nucleotide sequence ID" value="NC_008101.1"/>
</dbReference>
<dbReference type="SMR" id="Q1KVW5"/>
<dbReference type="GeneID" id="4099827"/>
<dbReference type="GO" id="GO:0009535">
    <property type="term" value="C:chloroplast thylakoid membrane"/>
    <property type="evidence" value="ECO:0007669"/>
    <property type="project" value="UniProtKB-SubCell"/>
</dbReference>
<dbReference type="GO" id="GO:0045259">
    <property type="term" value="C:proton-transporting ATP synthase complex"/>
    <property type="evidence" value="ECO:0007669"/>
    <property type="project" value="UniProtKB-KW"/>
</dbReference>
<dbReference type="GO" id="GO:0005524">
    <property type="term" value="F:ATP binding"/>
    <property type="evidence" value="ECO:0007669"/>
    <property type="project" value="UniProtKB-UniRule"/>
</dbReference>
<dbReference type="GO" id="GO:0046933">
    <property type="term" value="F:proton-transporting ATP synthase activity, rotational mechanism"/>
    <property type="evidence" value="ECO:0007669"/>
    <property type="project" value="UniProtKB-UniRule"/>
</dbReference>
<dbReference type="CDD" id="cd12152">
    <property type="entry name" value="F1-ATPase_delta"/>
    <property type="match status" value="1"/>
</dbReference>
<dbReference type="Gene3D" id="6.10.140.480">
    <property type="match status" value="1"/>
</dbReference>
<dbReference type="Gene3D" id="2.60.15.10">
    <property type="entry name" value="F0F1 ATP synthase delta/epsilon subunit, N-terminal"/>
    <property type="match status" value="1"/>
</dbReference>
<dbReference type="HAMAP" id="MF_00530">
    <property type="entry name" value="ATP_synth_epsil_bac"/>
    <property type="match status" value="1"/>
</dbReference>
<dbReference type="InterPro" id="IPR001469">
    <property type="entry name" value="ATP_synth_F1_dsu/esu"/>
</dbReference>
<dbReference type="InterPro" id="IPR020546">
    <property type="entry name" value="ATP_synth_F1_dsu/esu_N"/>
</dbReference>
<dbReference type="InterPro" id="IPR020547">
    <property type="entry name" value="ATP_synth_F1_esu_C"/>
</dbReference>
<dbReference type="InterPro" id="IPR036771">
    <property type="entry name" value="ATPsynth_dsu/esu_N"/>
</dbReference>
<dbReference type="NCBIfam" id="TIGR01216">
    <property type="entry name" value="ATP_synt_epsi"/>
    <property type="match status" value="1"/>
</dbReference>
<dbReference type="PANTHER" id="PTHR13822">
    <property type="entry name" value="ATP SYNTHASE DELTA/EPSILON CHAIN"/>
    <property type="match status" value="1"/>
</dbReference>
<dbReference type="PANTHER" id="PTHR13822:SF10">
    <property type="entry name" value="ATP SYNTHASE EPSILON CHAIN, CHLOROPLASTIC"/>
    <property type="match status" value="1"/>
</dbReference>
<dbReference type="Pfam" id="PF00401">
    <property type="entry name" value="ATP-synt_DE"/>
    <property type="match status" value="1"/>
</dbReference>
<dbReference type="Pfam" id="PF02823">
    <property type="entry name" value="ATP-synt_DE_N"/>
    <property type="match status" value="1"/>
</dbReference>
<dbReference type="SUPFAM" id="SSF51344">
    <property type="entry name" value="Epsilon subunit of F1F0-ATP synthase N-terminal domain"/>
    <property type="match status" value="1"/>
</dbReference>
<sequence length="136" mass="14984">MSLQISILTPEKPFWNGQAEEIILPTETGEMGVLKNHAPIITGLDVGAMLVRTKEEWNSYALMGGFAVVKKNKVTILANEAESAETIDAEEAKNAFEIAKGNLEKAEGVKQKVEANFAYKRAKARFQVVKVVNKYS</sequence>
<comment type="function">
    <text evidence="1">Produces ATP from ADP in the presence of a proton gradient across the membrane.</text>
</comment>
<comment type="subunit">
    <text evidence="1">F-type ATPases have 2 components, CF(1) - the catalytic core - and CF(0) - the membrane proton channel. CF(1) has five subunits: alpha(3), beta(3), gamma(1), delta(1), epsilon(1). CF(0) has three main subunits: a, b and c.</text>
</comment>
<comment type="subcellular location">
    <subcellularLocation>
        <location evidence="1">Plastid</location>
        <location evidence="1">Chloroplast thylakoid membrane</location>
        <topology evidence="1">Peripheral membrane protein</topology>
    </subcellularLocation>
</comment>
<comment type="similarity">
    <text evidence="1">Belongs to the ATPase epsilon chain family.</text>
</comment>
<name>ATPE_TETOB</name>
<reference key="1">
    <citation type="journal article" date="2006" name="BMC Evol. Biol.">
        <title>The complete chloroplast genome sequence of the chlorophycean green alga Scenedesmus obliquus reveals a compact gene organization and a biased distribution of genes on the two DNA strands.</title>
        <authorList>
            <person name="de Cambiaire J.-C."/>
            <person name="Otis C."/>
            <person name="Lemieux C."/>
            <person name="Turmel M."/>
        </authorList>
    </citation>
    <scope>NUCLEOTIDE SEQUENCE [LARGE SCALE GENOMIC DNA]</scope>
    <source>
        <strain>UTEX 393</strain>
    </source>
</reference>
<organism>
    <name type="scientific">Tetradesmus obliquus</name>
    <name type="common">Green alga</name>
    <name type="synonym">Acutodesmus obliquus</name>
    <dbReference type="NCBI Taxonomy" id="3088"/>
    <lineage>
        <taxon>Eukaryota</taxon>
        <taxon>Viridiplantae</taxon>
        <taxon>Chlorophyta</taxon>
        <taxon>core chlorophytes</taxon>
        <taxon>Chlorophyceae</taxon>
        <taxon>CS clade</taxon>
        <taxon>Sphaeropleales</taxon>
        <taxon>Scenedesmaceae</taxon>
        <taxon>Tetradesmus</taxon>
    </lineage>
</organism>
<protein>
    <recommendedName>
        <fullName evidence="1">ATP synthase epsilon chain, chloroplastic</fullName>
    </recommendedName>
    <alternativeName>
        <fullName evidence="1">ATP synthase F1 sector epsilon subunit</fullName>
    </alternativeName>
    <alternativeName>
        <fullName evidence="1">F-ATPase epsilon subunit</fullName>
    </alternativeName>
</protein>
<evidence type="ECO:0000255" key="1">
    <source>
        <dbReference type="HAMAP-Rule" id="MF_00530"/>
    </source>
</evidence>
<keyword id="KW-0066">ATP synthesis</keyword>
<keyword id="KW-0139">CF(1)</keyword>
<keyword id="KW-0150">Chloroplast</keyword>
<keyword id="KW-0375">Hydrogen ion transport</keyword>
<keyword id="KW-0406">Ion transport</keyword>
<keyword id="KW-0472">Membrane</keyword>
<keyword id="KW-0934">Plastid</keyword>
<keyword id="KW-0793">Thylakoid</keyword>
<keyword id="KW-0813">Transport</keyword>
<accession>Q1KVW5</accession>
<geneLocation type="chloroplast"/>